<accession>Q54FD6</accession>
<keyword id="KW-0479">Metal-binding</keyword>
<keyword id="KW-0539">Nucleus</keyword>
<keyword id="KW-1185">Reference proteome</keyword>
<keyword id="KW-0677">Repeat</keyword>
<keyword id="KW-0804">Transcription</keyword>
<keyword id="KW-0805">Transcription regulation</keyword>
<keyword id="KW-0862">Zinc</keyword>
<keyword id="KW-0863">Zinc-finger</keyword>
<evidence type="ECO:0000250" key="1">
    <source>
        <dbReference type="UniProtKB" id="Q00403"/>
    </source>
</evidence>
<evidence type="ECO:0000255" key="2">
    <source>
        <dbReference type="PROSITE-ProRule" id="PRU00469"/>
    </source>
</evidence>
<evidence type="ECO:0000305" key="3"/>
<dbReference type="EMBL" id="AAFI02000172">
    <property type="protein sequence ID" value="EAL61980.1"/>
    <property type="molecule type" value="Genomic_DNA"/>
</dbReference>
<dbReference type="RefSeq" id="XP_635486.1">
    <property type="nucleotide sequence ID" value="XM_630394.1"/>
</dbReference>
<dbReference type="SMR" id="Q54FD6"/>
<dbReference type="FunCoup" id="Q54FD6">
    <property type="interactions" value="676"/>
</dbReference>
<dbReference type="STRING" id="44689.Q54FD6"/>
<dbReference type="GlyGen" id="Q54FD6">
    <property type="glycosylation" value="1 site"/>
</dbReference>
<dbReference type="PaxDb" id="44689-DDB0216283"/>
<dbReference type="EnsemblProtists" id="EAL61980">
    <property type="protein sequence ID" value="EAL61980"/>
    <property type="gene ID" value="DDB_G0290929"/>
</dbReference>
<dbReference type="GeneID" id="8627902"/>
<dbReference type="KEGG" id="ddi:DDB_G0290929"/>
<dbReference type="dictyBase" id="DDB_G0290929">
    <property type="gene designation" value="gtf2b"/>
</dbReference>
<dbReference type="VEuPathDB" id="AmoebaDB:DDB_G0290929"/>
<dbReference type="eggNOG" id="KOG1597">
    <property type="taxonomic scope" value="Eukaryota"/>
</dbReference>
<dbReference type="HOGENOM" id="CLU_043736_1_1_1"/>
<dbReference type="InParanoid" id="Q54FD6"/>
<dbReference type="OMA" id="DHDQRMK"/>
<dbReference type="PhylomeDB" id="Q54FD6"/>
<dbReference type="Reactome" id="R-DDI-674695">
    <property type="pathway name" value="RNA Polymerase II Pre-transcription Events"/>
</dbReference>
<dbReference type="Reactome" id="R-DDI-6807505">
    <property type="pathway name" value="RNA polymerase II transcribes snRNA genes"/>
</dbReference>
<dbReference type="Reactome" id="R-DDI-73776">
    <property type="pathway name" value="RNA Polymerase II Promoter Escape"/>
</dbReference>
<dbReference type="Reactome" id="R-DDI-73779">
    <property type="pathway name" value="RNA Polymerase II Transcription Pre-Initiation And Promoter Opening"/>
</dbReference>
<dbReference type="Reactome" id="R-DDI-75953">
    <property type="pathway name" value="RNA Polymerase II Transcription Initiation"/>
</dbReference>
<dbReference type="Reactome" id="R-DDI-76042">
    <property type="pathway name" value="RNA Polymerase II Transcription Initiation And Promoter Clearance"/>
</dbReference>
<dbReference type="PRO" id="PR:Q54FD6"/>
<dbReference type="Proteomes" id="UP000002195">
    <property type="component" value="Chromosome 5"/>
</dbReference>
<dbReference type="GO" id="GO:0005634">
    <property type="term" value="C:nucleus"/>
    <property type="evidence" value="ECO:0000250"/>
    <property type="project" value="dictyBase"/>
</dbReference>
<dbReference type="GO" id="GO:0032993">
    <property type="term" value="C:protein-DNA complex"/>
    <property type="evidence" value="ECO:0000250"/>
    <property type="project" value="UniProtKB"/>
</dbReference>
<dbReference type="GO" id="GO:0097550">
    <property type="term" value="C:transcription preinitiation complex"/>
    <property type="evidence" value="ECO:0000318"/>
    <property type="project" value="GO_Central"/>
</dbReference>
<dbReference type="GO" id="GO:0000993">
    <property type="term" value="F:RNA polymerase II complex binding"/>
    <property type="evidence" value="ECO:0000250"/>
    <property type="project" value="UniProtKB"/>
</dbReference>
<dbReference type="GO" id="GO:0001139">
    <property type="term" value="F:RNA polymerase II complex recruiting activity"/>
    <property type="evidence" value="ECO:0000250"/>
    <property type="project" value="dictyBase"/>
</dbReference>
<dbReference type="GO" id="GO:0000979">
    <property type="term" value="F:RNA polymerase II core promoter sequence-specific DNA binding"/>
    <property type="evidence" value="ECO:0000250"/>
    <property type="project" value="UniProtKB"/>
</dbReference>
<dbReference type="GO" id="GO:0016251">
    <property type="term" value="F:RNA polymerase II general transcription initiation factor activity"/>
    <property type="evidence" value="ECO:0000318"/>
    <property type="project" value="GO_Central"/>
</dbReference>
<dbReference type="GO" id="GO:0017025">
    <property type="term" value="F:TBP-class protein binding"/>
    <property type="evidence" value="ECO:0000318"/>
    <property type="project" value="GO_Central"/>
</dbReference>
<dbReference type="GO" id="GO:0008270">
    <property type="term" value="F:zinc ion binding"/>
    <property type="evidence" value="ECO:0000250"/>
    <property type="project" value="UniProtKB"/>
</dbReference>
<dbReference type="GO" id="GO:0006352">
    <property type="term" value="P:DNA-templated transcription initiation"/>
    <property type="evidence" value="ECO:0000318"/>
    <property type="project" value="GO_Central"/>
</dbReference>
<dbReference type="GO" id="GO:1990114">
    <property type="term" value="P:RNA polymerase II core complex assembly"/>
    <property type="evidence" value="ECO:0000250"/>
    <property type="project" value="UniProtKB"/>
</dbReference>
<dbReference type="GO" id="GO:0051123">
    <property type="term" value="P:RNA polymerase II preinitiation complex assembly"/>
    <property type="evidence" value="ECO:0000250"/>
    <property type="project" value="UniProtKB"/>
</dbReference>
<dbReference type="GO" id="GO:0006366">
    <property type="term" value="P:transcription by RNA polymerase II"/>
    <property type="evidence" value="ECO:0000250"/>
    <property type="project" value="UniProtKB"/>
</dbReference>
<dbReference type="GO" id="GO:0006367">
    <property type="term" value="P:transcription initiation at RNA polymerase II promoter"/>
    <property type="evidence" value="ECO:0000250"/>
    <property type="project" value="UniProtKB"/>
</dbReference>
<dbReference type="GO" id="GO:0001174">
    <property type="term" value="P:transcriptional start site selection at RNA polymerase II promoter"/>
    <property type="evidence" value="ECO:0000250"/>
    <property type="project" value="UniProtKB"/>
</dbReference>
<dbReference type="CDD" id="cd20551">
    <property type="entry name" value="CYCLIN_TFIIB_rpt1"/>
    <property type="match status" value="1"/>
</dbReference>
<dbReference type="CDD" id="cd20552">
    <property type="entry name" value="CYCLIN_TFIIB_rpt2"/>
    <property type="match status" value="1"/>
</dbReference>
<dbReference type="FunFam" id="1.10.472.10:FF:000008">
    <property type="entry name" value="Transcription initiation factor IIB"/>
    <property type="match status" value="1"/>
</dbReference>
<dbReference type="FunFam" id="1.10.472.170:FF:000001">
    <property type="entry name" value="Transcription initiation factor IIB"/>
    <property type="match status" value="1"/>
</dbReference>
<dbReference type="FunFam" id="1.10.472.10:FF:000019">
    <property type="entry name" value="transcription initiation factor IIB"/>
    <property type="match status" value="1"/>
</dbReference>
<dbReference type="Gene3D" id="1.10.472.170">
    <property type="match status" value="1"/>
</dbReference>
<dbReference type="Gene3D" id="1.10.472.10">
    <property type="entry name" value="Cyclin-like"/>
    <property type="match status" value="1"/>
</dbReference>
<dbReference type="InterPro" id="IPR013763">
    <property type="entry name" value="Cyclin-like_dom"/>
</dbReference>
<dbReference type="InterPro" id="IPR036915">
    <property type="entry name" value="Cyclin-like_sf"/>
</dbReference>
<dbReference type="InterPro" id="IPR000812">
    <property type="entry name" value="TFIIB"/>
</dbReference>
<dbReference type="InterPro" id="IPR023486">
    <property type="entry name" value="TFIIB_CS"/>
</dbReference>
<dbReference type="InterPro" id="IPR013150">
    <property type="entry name" value="TFIIB_cyclin"/>
</dbReference>
<dbReference type="InterPro" id="IPR013137">
    <property type="entry name" value="Znf_TFIIB"/>
</dbReference>
<dbReference type="PANTHER" id="PTHR11618:SF13">
    <property type="entry name" value="TRANSCRIPTION INITIATION FACTOR IIB"/>
    <property type="match status" value="1"/>
</dbReference>
<dbReference type="PANTHER" id="PTHR11618">
    <property type="entry name" value="TRANSCRIPTION INITIATION FACTOR IIB-RELATED"/>
    <property type="match status" value="1"/>
</dbReference>
<dbReference type="Pfam" id="PF00382">
    <property type="entry name" value="TFIIB"/>
    <property type="match status" value="2"/>
</dbReference>
<dbReference type="Pfam" id="PF08271">
    <property type="entry name" value="Zn_Ribbon_TF"/>
    <property type="match status" value="1"/>
</dbReference>
<dbReference type="PRINTS" id="PR00685">
    <property type="entry name" value="TIFACTORIIB"/>
</dbReference>
<dbReference type="SMART" id="SM00385">
    <property type="entry name" value="CYCLIN"/>
    <property type="match status" value="2"/>
</dbReference>
<dbReference type="SUPFAM" id="SSF47954">
    <property type="entry name" value="Cyclin-like"/>
    <property type="match status" value="2"/>
</dbReference>
<dbReference type="SUPFAM" id="SSF57783">
    <property type="entry name" value="Zinc beta-ribbon"/>
    <property type="match status" value="1"/>
</dbReference>
<dbReference type="PROSITE" id="PS00782">
    <property type="entry name" value="TFIIB"/>
    <property type="match status" value="1"/>
</dbReference>
<dbReference type="PROSITE" id="PS51134">
    <property type="entry name" value="ZF_TFIIB"/>
    <property type="match status" value="1"/>
</dbReference>
<gene>
    <name type="primary">gtf2b</name>
    <name type="synonym">tfiib</name>
    <name type="ORF">DDB_G0290929</name>
</gene>
<comment type="function">
    <text evidence="1">General transcription factor that plays a role in transcription initiation by RNA polymerase II (Pol II). Involved in the pre-initiation complex (PIC) formation and Pol II recruitment at promoter DNA.</text>
</comment>
<comment type="subcellular location">
    <subcellularLocation>
        <location evidence="1">Nucleus</location>
    </subcellularLocation>
</comment>
<comment type="similarity">
    <text evidence="3">Belongs to the TFIIB family.</text>
</comment>
<protein>
    <recommendedName>
        <fullName evidence="1">Transcription initiation factor IIB</fullName>
    </recommendedName>
    <alternativeName>
        <fullName evidence="1">General transcription factor TFIIB</fullName>
    </alternativeName>
</protein>
<sequence>MLSAAPKPTPQNKKQSFYNKLWCMVCRIQDPDIIEDYAKGDLICRGCGVVVGDRIVDEHSEWRTFSNSESTGADPNRVGGPINPLLRDSALSTTVGKGSKDSGTLTRLQNKSALGTGDRNLLAAFKEIGRMADHMNLPQTVQDRANELFRFMDDKKSTKGRSVDGMVAAALYIACRQEHLSRTFKEIAALTNVPKKEISRCYKIMKETFASVLNLQTISSEDFTSRFCSTLKLPNDVKKGAEHVSKMAMDMGIVAGKSPISVTAASIYMVSQLSPEKRTQKQIADVSGVSEVTIRNAYKDLYAKRDQLIPSDSPYFSQVQYLPTN</sequence>
<feature type="chain" id="PRO_0000328160" description="Transcription initiation factor IIB">
    <location>
        <begin position="1"/>
        <end position="325"/>
    </location>
</feature>
<feature type="repeat" description="1">
    <location>
        <begin position="131"/>
        <end position="207"/>
    </location>
</feature>
<feature type="repeat" description="2">
    <location>
        <begin position="227"/>
        <end position="303"/>
    </location>
</feature>
<feature type="zinc finger region" description="TFIIB-type" evidence="2">
    <location>
        <begin position="19"/>
        <end position="52"/>
    </location>
</feature>
<feature type="binding site" evidence="2">
    <location>
        <position position="23"/>
    </location>
    <ligand>
        <name>Zn(2+)</name>
        <dbReference type="ChEBI" id="CHEBI:29105"/>
    </ligand>
</feature>
<feature type="binding site" evidence="2">
    <location>
        <position position="26"/>
    </location>
    <ligand>
        <name>Zn(2+)</name>
        <dbReference type="ChEBI" id="CHEBI:29105"/>
    </ligand>
</feature>
<feature type="binding site" evidence="2">
    <location>
        <position position="44"/>
    </location>
    <ligand>
        <name>Zn(2+)</name>
        <dbReference type="ChEBI" id="CHEBI:29105"/>
    </ligand>
</feature>
<feature type="binding site" evidence="2">
    <location>
        <position position="47"/>
    </location>
    <ligand>
        <name>Zn(2+)</name>
        <dbReference type="ChEBI" id="CHEBI:29105"/>
    </ligand>
</feature>
<proteinExistence type="inferred from homology"/>
<name>TF2B_DICDI</name>
<organism>
    <name type="scientific">Dictyostelium discoideum</name>
    <name type="common">Social amoeba</name>
    <dbReference type="NCBI Taxonomy" id="44689"/>
    <lineage>
        <taxon>Eukaryota</taxon>
        <taxon>Amoebozoa</taxon>
        <taxon>Evosea</taxon>
        <taxon>Eumycetozoa</taxon>
        <taxon>Dictyostelia</taxon>
        <taxon>Dictyosteliales</taxon>
        <taxon>Dictyosteliaceae</taxon>
        <taxon>Dictyostelium</taxon>
    </lineage>
</organism>
<reference key="1">
    <citation type="journal article" date="2005" name="Nature">
        <title>The genome of the social amoeba Dictyostelium discoideum.</title>
        <authorList>
            <person name="Eichinger L."/>
            <person name="Pachebat J.A."/>
            <person name="Gloeckner G."/>
            <person name="Rajandream M.A."/>
            <person name="Sucgang R."/>
            <person name="Berriman M."/>
            <person name="Song J."/>
            <person name="Olsen R."/>
            <person name="Szafranski K."/>
            <person name="Xu Q."/>
            <person name="Tunggal B."/>
            <person name="Kummerfeld S."/>
            <person name="Madera M."/>
            <person name="Konfortov B.A."/>
            <person name="Rivero F."/>
            <person name="Bankier A.T."/>
            <person name="Lehmann R."/>
            <person name="Hamlin N."/>
            <person name="Davies R."/>
            <person name="Gaudet P."/>
            <person name="Fey P."/>
            <person name="Pilcher K."/>
            <person name="Chen G."/>
            <person name="Saunders D."/>
            <person name="Sodergren E.J."/>
            <person name="Davis P."/>
            <person name="Kerhornou A."/>
            <person name="Nie X."/>
            <person name="Hall N."/>
            <person name="Anjard C."/>
            <person name="Hemphill L."/>
            <person name="Bason N."/>
            <person name="Farbrother P."/>
            <person name="Desany B."/>
            <person name="Just E."/>
            <person name="Morio T."/>
            <person name="Rost R."/>
            <person name="Churcher C.M."/>
            <person name="Cooper J."/>
            <person name="Haydock S."/>
            <person name="van Driessche N."/>
            <person name="Cronin A."/>
            <person name="Goodhead I."/>
            <person name="Muzny D.M."/>
            <person name="Mourier T."/>
            <person name="Pain A."/>
            <person name="Lu M."/>
            <person name="Harper D."/>
            <person name="Lindsay R."/>
            <person name="Hauser H."/>
            <person name="James K.D."/>
            <person name="Quiles M."/>
            <person name="Madan Babu M."/>
            <person name="Saito T."/>
            <person name="Buchrieser C."/>
            <person name="Wardroper A."/>
            <person name="Felder M."/>
            <person name="Thangavelu M."/>
            <person name="Johnson D."/>
            <person name="Knights A."/>
            <person name="Loulseged H."/>
            <person name="Mungall K.L."/>
            <person name="Oliver K."/>
            <person name="Price C."/>
            <person name="Quail M.A."/>
            <person name="Urushihara H."/>
            <person name="Hernandez J."/>
            <person name="Rabbinowitsch E."/>
            <person name="Steffen D."/>
            <person name="Sanders M."/>
            <person name="Ma J."/>
            <person name="Kohara Y."/>
            <person name="Sharp S."/>
            <person name="Simmonds M.N."/>
            <person name="Spiegler S."/>
            <person name="Tivey A."/>
            <person name="Sugano S."/>
            <person name="White B."/>
            <person name="Walker D."/>
            <person name="Woodward J.R."/>
            <person name="Winckler T."/>
            <person name="Tanaka Y."/>
            <person name="Shaulsky G."/>
            <person name="Schleicher M."/>
            <person name="Weinstock G.M."/>
            <person name="Rosenthal A."/>
            <person name="Cox E.C."/>
            <person name="Chisholm R.L."/>
            <person name="Gibbs R.A."/>
            <person name="Loomis W.F."/>
            <person name="Platzer M."/>
            <person name="Kay R.R."/>
            <person name="Williams J.G."/>
            <person name="Dear P.H."/>
            <person name="Noegel A.A."/>
            <person name="Barrell B.G."/>
            <person name="Kuspa A."/>
        </authorList>
    </citation>
    <scope>NUCLEOTIDE SEQUENCE [LARGE SCALE GENOMIC DNA]</scope>
    <source>
        <strain>AX4</strain>
    </source>
</reference>